<feature type="chain" id="PRO_0000183590" description="Cytochrome c oxidase subunit 2">
    <location>
        <begin position="1"/>
        <end position="227"/>
    </location>
</feature>
<feature type="topological domain" description="Mitochondrial intermembrane" evidence="4">
    <location>
        <begin position="1"/>
        <end position="14"/>
    </location>
</feature>
<feature type="transmembrane region" description="Helical; Name=I" evidence="4">
    <location>
        <begin position="15"/>
        <end position="45"/>
    </location>
</feature>
<feature type="topological domain" description="Mitochondrial matrix" evidence="4">
    <location>
        <begin position="46"/>
        <end position="59"/>
    </location>
</feature>
<feature type="transmembrane region" description="Helical; Name=II" evidence="4">
    <location>
        <begin position="60"/>
        <end position="87"/>
    </location>
</feature>
<feature type="topological domain" description="Mitochondrial intermembrane" evidence="4">
    <location>
        <begin position="88"/>
        <end position="227"/>
    </location>
</feature>
<feature type="binding site" evidence="4">
    <location>
        <position position="161"/>
    </location>
    <ligand>
        <name>Cu cation</name>
        <dbReference type="ChEBI" id="CHEBI:23378"/>
        <label>A1</label>
    </ligand>
</feature>
<feature type="binding site" evidence="4">
    <location>
        <position position="196"/>
    </location>
    <ligand>
        <name>Cu cation</name>
        <dbReference type="ChEBI" id="CHEBI:23378"/>
        <label>A1</label>
    </ligand>
</feature>
<feature type="binding site" evidence="4">
    <location>
        <position position="196"/>
    </location>
    <ligand>
        <name>Cu cation</name>
        <dbReference type="ChEBI" id="CHEBI:23378"/>
        <label>A2</label>
    </ligand>
</feature>
<feature type="binding site" evidence="4">
    <location>
        <position position="198"/>
    </location>
    <ligand>
        <name>Cu cation</name>
        <dbReference type="ChEBI" id="CHEBI:23378"/>
        <label>A2</label>
    </ligand>
</feature>
<feature type="binding site" evidence="4">
    <location>
        <position position="198"/>
    </location>
    <ligand>
        <name>Mg(2+)</name>
        <dbReference type="ChEBI" id="CHEBI:18420"/>
        <note>ligand shared with MT-CO1</note>
    </ligand>
</feature>
<feature type="binding site" evidence="4">
    <location>
        <position position="200"/>
    </location>
    <ligand>
        <name>Cu cation</name>
        <dbReference type="ChEBI" id="CHEBI:23378"/>
        <label>A1</label>
    </ligand>
</feature>
<feature type="binding site" evidence="4">
    <location>
        <position position="200"/>
    </location>
    <ligand>
        <name>Cu cation</name>
        <dbReference type="ChEBI" id="CHEBI:23378"/>
        <label>A2</label>
    </ligand>
</feature>
<feature type="binding site" evidence="4">
    <location>
        <position position="204"/>
    </location>
    <ligand>
        <name>Cu cation</name>
        <dbReference type="ChEBI" id="CHEBI:23378"/>
        <label>A2</label>
    </ligand>
</feature>
<feature type="binding site" evidence="4">
    <location>
        <position position="207"/>
    </location>
    <ligand>
        <name>Cu cation</name>
        <dbReference type="ChEBI" id="CHEBI:23378"/>
        <label>A1</label>
    </ligand>
</feature>
<feature type="modified residue" description="Phosphotyrosine" evidence="2">
    <location>
        <position position="218"/>
    </location>
</feature>
<accession>O47672</accession>
<name>COX2_CERTH</name>
<keyword id="KW-0186">Copper</keyword>
<keyword id="KW-0249">Electron transport</keyword>
<keyword id="KW-0460">Magnesium</keyword>
<keyword id="KW-0472">Membrane</keyword>
<keyword id="KW-0479">Metal-binding</keyword>
<keyword id="KW-0496">Mitochondrion</keyword>
<keyword id="KW-0999">Mitochondrion inner membrane</keyword>
<keyword id="KW-0597">Phosphoprotein</keyword>
<keyword id="KW-0679">Respiratory chain</keyword>
<keyword id="KW-1278">Translocase</keyword>
<keyword id="KW-0812">Transmembrane</keyword>
<keyword id="KW-1133">Transmembrane helix</keyword>
<keyword id="KW-0813">Transport</keyword>
<sequence length="227" mass="26033">MAYPFQLGLQDATSPIMEELLHFHDHTLMIVFLISSLVLYIISLMLTTKLTHTSTMDAQEVETVWTILPAIILVLIALPSLRILYMMDEINNPSLTVKTMGHQWYWSYEYTDYEDLNFDSYMIPTQELKPGELRLLEVDNRVVLPMEMTVRMLISSEDVLHSWAVPSLGLKTDAIPGRLNQTTLMAMRPGLYYGQCSEICGSNHSFMPIVLEMVPLSYFETWSALMV</sequence>
<proteinExistence type="inferred from homology"/>
<organism>
    <name type="scientific">Cerdocyon thous</name>
    <name type="common">Crab-eating fox</name>
    <name type="synonym">Dusicyon thous</name>
    <dbReference type="NCBI Taxonomy" id="9620"/>
    <lineage>
        <taxon>Eukaryota</taxon>
        <taxon>Metazoa</taxon>
        <taxon>Chordata</taxon>
        <taxon>Craniata</taxon>
        <taxon>Vertebrata</taxon>
        <taxon>Euteleostomi</taxon>
        <taxon>Mammalia</taxon>
        <taxon>Eutheria</taxon>
        <taxon>Laurasiatheria</taxon>
        <taxon>Carnivora</taxon>
        <taxon>Caniformia</taxon>
        <taxon>Canidae</taxon>
        <taxon>Cerdocyon</taxon>
    </lineage>
</organism>
<dbReference type="EC" id="7.1.1.9"/>
<dbReference type="EMBL" id="AF028217">
    <property type="protein sequence ID" value="AAC00110.1"/>
    <property type="molecule type" value="Genomic_DNA"/>
</dbReference>
<dbReference type="SMR" id="O47672"/>
<dbReference type="GO" id="GO:0005743">
    <property type="term" value="C:mitochondrial inner membrane"/>
    <property type="evidence" value="ECO:0007669"/>
    <property type="project" value="UniProtKB-SubCell"/>
</dbReference>
<dbReference type="GO" id="GO:0045277">
    <property type="term" value="C:respiratory chain complex IV"/>
    <property type="evidence" value="ECO:0000250"/>
    <property type="project" value="UniProtKB"/>
</dbReference>
<dbReference type="GO" id="GO:0005507">
    <property type="term" value="F:copper ion binding"/>
    <property type="evidence" value="ECO:0007669"/>
    <property type="project" value="InterPro"/>
</dbReference>
<dbReference type="GO" id="GO:0004129">
    <property type="term" value="F:cytochrome-c oxidase activity"/>
    <property type="evidence" value="ECO:0007669"/>
    <property type="project" value="UniProtKB-EC"/>
</dbReference>
<dbReference type="GO" id="GO:0042773">
    <property type="term" value="P:ATP synthesis coupled electron transport"/>
    <property type="evidence" value="ECO:0007669"/>
    <property type="project" value="TreeGrafter"/>
</dbReference>
<dbReference type="CDD" id="cd13912">
    <property type="entry name" value="CcO_II_C"/>
    <property type="match status" value="1"/>
</dbReference>
<dbReference type="FunFam" id="1.10.287.90:FF:000001">
    <property type="entry name" value="Cytochrome c oxidase subunit 2"/>
    <property type="match status" value="1"/>
</dbReference>
<dbReference type="FunFam" id="2.60.40.420:FF:000001">
    <property type="entry name" value="Cytochrome c oxidase subunit 2"/>
    <property type="match status" value="1"/>
</dbReference>
<dbReference type="Gene3D" id="1.10.287.90">
    <property type="match status" value="1"/>
</dbReference>
<dbReference type="Gene3D" id="2.60.40.420">
    <property type="entry name" value="Cupredoxins - blue copper proteins"/>
    <property type="match status" value="1"/>
</dbReference>
<dbReference type="InterPro" id="IPR045187">
    <property type="entry name" value="CcO_II"/>
</dbReference>
<dbReference type="InterPro" id="IPR002429">
    <property type="entry name" value="CcO_II-like_C"/>
</dbReference>
<dbReference type="InterPro" id="IPR034210">
    <property type="entry name" value="CcO_II_C"/>
</dbReference>
<dbReference type="InterPro" id="IPR001505">
    <property type="entry name" value="Copper_CuA"/>
</dbReference>
<dbReference type="InterPro" id="IPR008972">
    <property type="entry name" value="Cupredoxin"/>
</dbReference>
<dbReference type="InterPro" id="IPR014222">
    <property type="entry name" value="Cyt_c_oxidase_su2"/>
</dbReference>
<dbReference type="InterPro" id="IPR011759">
    <property type="entry name" value="Cyt_c_oxidase_su2_TM_dom"/>
</dbReference>
<dbReference type="InterPro" id="IPR036257">
    <property type="entry name" value="Cyt_c_oxidase_su2_TM_sf"/>
</dbReference>
<dbReference type="NCBIfam" id="TIGR02866">
    <property type="entry name" value="CoxB"/>
    <property type="match status" value="1"/>
</dbReference>
<dbReference type="PANTHER" id="PTHR22888:SF9">
    <property type="entry name" value="CYTOCHROME C OXIDASE SUBUNIT 2"/>
    <property type="match status" value="1"/>
</dbReference>
<dbReference type="PANTHER" id="PTHR22888">
    <property type="entry name" value="CYTOCHROME C OXIDASE, SUBUNIT II"/>
    <property type="match status" value="1"/>
</dbReference>
<dbReference type="Pfam" id="PF00116">
    <property type="entry name" value="COX2"/>
    <property type="match status" value="1"/>
</dbReference>
<dbReference type="Pfam" id="PF02790">
    <property type="entry name" value="COX2_TM"/>
    <property type="match status" value="1"/>
</dbReference>
<dbReference type="PRINTS" id="PR01166">
    <property type="entry name" value="CYCOXIDASEII"/>
</dbReference>
<dbReference type="SUPFAM" id="SSF49503">
    <property type="entry name" value="Cupredoxins"/>
    <property type="match status" value="1"/>
</dbReference>
<dbReference type="SUPFAM" id="SSF81464">
    <property type="entry name" value="Cytochrome c oxidase subunit II-like, transmembrane region"/>
    <property type="match status" value="1"/>
</dbReference>
<dbReference type="PROSITE" id="PS00078">
    <property type="entry name" value="COX2"/>
    <property type="match status" value="1"/>
</dbReference>
<dbReference type="PROSITE" id="PS50857">
    <property type="entry name" value="COX2_CUA"/>
    <property type="match status" value="1"/>
</dbReference>
<dbReference type="PROSITE" id="PS50999">
    <property type="entry name" value="COX2_TM"/>
    <property type="match status" value="1"/>
</dbReference>
<evidence type="ECO:0000250" key="1">
    <source>
        <dbReference type="UniProtKB" id="P00403"/>
    </source>
</evidence>
<evidence type="ECO:0000250" key="2">
    <source>
        <dbReference type="UniProtKB" id="P00406"/>
    </source>
</evidence>
<evidence type="ECO:0000250" key="3">
    <source>
        <dbReference type="UniProtKB" id="P00410"/>
    </source>
</evidence>
<evidence type="ECO:0000250" key="4">
    <source>
        <dbReference type="UniProtKB" id="P68530"/>
    </source>
</evidence>
<evidence type="ECO:0000305" key="5"/>
<protein>
    <recommendedName>
        <fullName>Cytochrome c oxidase subunit 2</fullName>
        <ecNumber>7.1.1.9</ecNumber>
    </recommendedName>
    <alternativeName>
        <fullName>Cytochrome c oxidase polypeptide II</fullName>
    </alternativeName>
</protein>
<gene>
    <name type="primary">MT-CO2</name>
    <name type="synonym">COII</name>
    <name type="synonym">COX2</name>
    <name type="synonym">COXII</name>
    <name type="synonym">MTCO2</name>
</gene>
<reference key="1">
    <citation type="journal article" date="1997" name="Syst. Biol.">
        <title>Molecular systematics of the Canidae.</title>
        <authorList>
            <person name="Wayne R.K."/>
            <person name="Geffen E."/>
            <person name="Girman D.J."/>
            <person name="Koepfli K.-P."/>
            <person name="Lau L.M."/>
            <person name="Marshall C.R."/>
        </authorList>
    </citation>
    <scope>NUCLEOTIDE SEQUENCE [GENOMIC DNA]</scope>
</reference>
<geneLocation type="mitochondrion"/>
<comment type="function">
    <text evidence="3">Component of the cytochrome c oxidase, the last enzyme in the mitochondrial electron transport chain which drives oxidative phosphorylation. The respiratory chain contains 3 multisubunit complexes succinate dehydrogenase (complex II, CII), ubiquinol-cytochrome c oxidoreductase (cytochrome b-c1 complex, complex III, CIII) and cytochrome c oxidase (complex IV, CIV), that cooperate to transfer electrons derived from NADH and succinate to molecular oxygen, creating an electrochemical gradient over the inner membrane that drives transmembrane transport and the ATP synthase. Cytochrome c oxidase is the component of the respiratory chain that catalyzes the reduction of oxygen to water. Electrons originating from reduced cytochrome c in the intermembrane space (IMS) are transferred via the dinuclear copper A center (CU(A)) of subunit 2 and heme A of subunit 1 to the active site in subunit 1, a binuclear center (BNC) formed by heme A3 and copper B (CU(B)). The BNC reduces molecular oxygen to 2 water molecules using 4 electrons from cytochrome c in the IMS and 4 protons from the mitochondrial matrix.</text>
</comment>
<comment type="catalytic activity">
    <reaction evidence="3">
        <text>4 Fe(II)-[cytochrome c] + O2 + 8 H(+)(in) = 4 Fe(III)-[cytochrome c] + 2 H2O + 4 H(+)(out)</text>
        <dbReference type="Rhea" id="RHEA:11436"/>
        <dbReference type="Rhea" id="RHEA-COMP:10350"/>
        <dbReference type="Rhea" id="RHEA-COMP:14399"/>
        <dbReference type="ChEBI" id="CHEBI:15377"/>
        <dbReference type="ChEBI" id="CHEBI:15378"/>
        <dbReference type="ChEBI" id="CHEBI:15379"/>
        <dbReference type="ChEBI" id="CHEBI:29033"/>
        <dbReference type="ChEBI" id="CHEBI:29034"/>
        <dbReference type="EC" id="7.1.1.9"/>
    </reaction>
    <physiologicalReaction direction="left-to-right" evidence="3">
        <dbReference type="Rhea" id="RHEA:11437"/>
    </physiologicalReaction>
</comment>
<comment type="cofactor">
    <cofactor evidence="4">
        <name>Cu cation</name>
        <dbReference type="ChEBI" id="CHEBI:23378"/>
    </cofactor>
    <text evidence="4">Binds a dinuclear copper A center per subunit.</text>
</comment>
<comment type="subunit">
    <text evidence="1 4">Component of the cytochrome c oxidase (complex IV, CIV), a multisubunit enzyme composed of 14 subunits. The complex is composed of a catalytic core of 3 subunits MT-CO1, MT-CO2 and MT-CO3, encoded in the mitochondrial DNA, and 11 supernumerary subunits COX4I, COX5A, COX5B, COX6A, COX6B, COX6C, COX7A, COX7B, COX7C, COX8 and NDUFA4, which are encoded in the nuclear genome. The complex exists as a monomer or a dimer and forms supercomplexes (SCs) in the inner mitochondrial membrane with NADH-ubiquinone oxidoreductase (complex I, CI) and ubiquinol-cytochrome c oxidoreductase (cytochrome b-c1 complex, complex III, CIII), resulting in different assemblies (supercomplex SCI(1)III(2)IV(1) and megacomplex MCI(2)III(2)IV(2)) (By similarity). Found in a complex with TMEM177, COA6, COX18, COX20, SCO1 and SCO2. Interacts with TMEM177 in a COX20-dependent manner. Interacts with COX20. Interacts with COX16 (By similarity).</text>
</comment>
<comment type="subcellular location">
    <subcellularLocation>
        <location evidence="4">Mitochondrion inner membrane</location>
        <topology evidence="4">Multi-pass membrane protein</topology>
    </subcellularLocation>
</comment>
<comment type="similarity">
    <text evidence="5">Belongs to the cytochrome c oxidase subunit 2 family.</text>
</comment>